<comment type="function">
    <text evidence="1">Reversibly catalyzes the transfer of the carbamoyl group from carbamoyl phosphate (CP) to the N(epsilon) atom of ornithine (ORN) to produce L-citrulline.</text>
</comment>
<comment type="catalytic activity">
    <reaction evidence="2">
        <text>carbamoyl phosphate + L-ornithine = L-citrulline + phosphate + H(+)</text>
        <dbReference type="Rhea" id="RHEA:19513"/>
        <dbReference type="ChEBI" id="CHEBI:15378"/>
        <dbReference type="ChEBI" id="CHEBI:43474"/>
        <dbReference type="ChEBI" id="CHEBI:46911"/>
        <dbReference type="ChEBI" id="CHEBI:57743"/>
        <dbReference type="ChEBI" id="CHEBI:58228"/>
        <dbReference type="EC" id="2.1.3.3"/>
    </reaction>
</comment>
<comment type="pathway">
    <text evidence="2">Amino-acid biosynthesis; L-arginine biosynthesis; L-arginine from L-ornithine and carbamoyl phosphate: step 1/3.</text>
</comment>
<comment type="subcellular location">
    <subcellularLocation>
        <location evidence="2">Cytoplasm</location>
    </subcellularLocation>
</comment>
<comment type="similarity">
    <text evidence="2">Belongs to the aspartate/ornithine carbamoyltransferase superfamily. OTCase family.</text>
</comment>
<evidence type="ECO:0000250" key="1"/>
<evidence type="ECO:0000255" key="2">
    <source>
        <dbReference type="HAMAP-Rule" id="MF_01109"/>
    </source>
</evidence>
<keyword id="KW-0028">Amino-acid biosynthesis</keyword>
<keyword id="KW-0055">Arginine biosynthesis</keyword>
<keyword id="KW-0963">Cytoplasm</keyword>
<keyword id="KW-0808">Transferase</keyword>
<organism>
    <name type="scientific">Clavibacter sepedonicus</name>
    <name type="common">Clavibacter michiganensis subsp. sepedonicus</name>
    <dbReference type="NCBI Taxonomy" id="31964"/>
    <lineage>
        <taxon>Bacteria</taxon>
        <taxon>Bacillati</taxon>
        <taxon>Actinomycetota</taxon>
        <taxon>Actinomycetes</taxon>
        <taxon>Micrococcales</taxon>
        <taxon>Microbacteriaceae</taxon>
        <taxon>Clavibacter</taxon>
    </lineage>
</organism>
<name>OTC_CLASE</name>
<dbReference type="EC" id="2.1.3.3" evidence="2"/>
<dbReference type="EMBL" id="AM849034">
    <property type="protein sequence ID" value="CAQ01351.1"/>
    <property type="molecule type" value="Genomic_DNA"/>
</dbReference>
<dbReference type="RefSeq" id="WP_012298629.1">
    <property type="nucleotide sequence ID" value="NZ_MZMN01000003.1"/>
</dbReference>
<dbReference type="SMR" id="B0RHD4"/>
<dbReference type="STRING" id="31964.CMS1235"/>
<dbReference type="KEGG" id="cms:CMS1235"/>
<dbReference type="eggNOG" id="COG0078">
    <property type="taxonomic scope" value="Bacteria"/>
</dbReference>
<dbReference type="HOGENOM" id="CLU_043846_3_2_11"/>
<dbReference type="OrthoDB" id="9802587at2"/>
<dbReference type="UniPathway" id="UPA00068">
    <property type="reaction ID" value="UER00112"/>
</dbReference>
<dbReference type="Proteomes" id="UP000001318">
    <property type="component" value="Chromosome"/>
</dbReference>
<dbReference type="GO" id="GO:0005737">
    <property type="term" value="C:cytoplasm"/>
    <property type="evidence" value="ECO:0007669"/>
    <property type="project" value="UniProtKB-SubCell"/>
</dbReference>
<dbReference type="GO" id="GO:0016597">
    <property type="term" value="F:amino acid binding"/>
    <property type="evidence" value="ECO:0007669"/>
    <property type="project" value="InterPro"/>
</dbReference>
<dbReference type="GO" id="GO:0004585">
    <property type="term" value="F:ornithine carbamoyltransferase activity"/>
    <property type="evidence" value="ECO:0007669"/>
    <property type="project" value="UniProtKB-UniRule"/>
</dbReference>
<dbReference type="GO" id="GO:0042450">
    <property type="term" value="P:arginine biosynthetic process via ornithine"/>
    <property type="evidence" value="ECO:0007669"/>
    <property type="project" value="TreeGrafter"/>
</dbReference>
<dbReference type="GO" id="GO:0019240">
    <property type="term" value="P:citrulline biosynthetic process"/>
    <property type="evidence" value="ECO:0007669"/>
    <property type="project" value="TreeGrafter"/>
</dbReference>
<dbReference type="GO" id="GO:0006526">
    <property type="term" value="P:L-arginine biosynthetic process"/>
    <property type="evidence" value="ECO:0007669"/>
    <property type="project" value="UniProtKB-UniRule"/>
</dbReference>
<dbReference type="FunFam" id="3.40.50.1370:FF:000008">
    <property type="entry name" value="Ornithine carbamoyltransferase"/>
    <property type="match status" value="1"/>
</dbReference>
<dbReference type="Gene3D" id="3.40.50.1370">
    <property type="entry name" value="Aspartate/ornithine carbamoyltransferase"/>
    <property type="match status" value="2"/>
</dbReference>
<dbReference type="HAMAP" id="MF_01109">
    <property type="entry name" value="OTCase"/>
    <property type="match status" value="1"/>
</dbReference>
<dbReference type="InterPro" id="IPR006132">
    <property type="entry name" value="Asp/Orn_carbamoyltranf_P-bd"/>
</dbReference>
<dbReference type="InterPro" id="IPR006130">
    <property type="entry name" value="Asp/Orn_carbamoylTrfase"/>
</dbReference>
<dbReference type="InterPro" id="IPR036901">
    <property type="entry name" value="Asp/Orn_carbamoylTrfase_sf"/>
</dbReference>
<dbReference type="InterPro" id="IPR006131">
    <property type="entry name" value="Asp_carbamoyltransf_Asp/Orn-bd"/>
</dbReference>
<dbReference type="InterPro" id="IPR002292">
    <property type="entry name" value="Orn/put_carbamltrans"/>
</dbReference>
<dbReference type="InterPro" id="IPR024904">
    <property type="entry name" value="OTCase_ArgI"/>
</dbReference>
<dbReference type="NCBIfam" id="TIGR00658">
    <property type="entry name" value="orni_carb_tr"/>
    <property type="match status" value="1"/>
</dbReference>
<dbReference type="NCBIfam" id="NF001986">
    <property type="entry name" value="PRK00779.1"/>
    <property type="match status" value="1"/>
</dbReference>
<dbReference type="PANTHER" id="PTHR45753">
    <property type="entry name" value="ORNITHINE CARBAMOYLTRANSFERASE, MITOCHONDRIAL"/>
    <property type="match status" value="1"/>
</dbReference>
<dbReference type="PANTHER" id="PTHR45753:SF3">
    <property type="entry name" value="ORNITHINE TRANSCARBAMYLASE, MITOCHONDRIAL"/>
    <property type="match status" value="1"/>
</dbReference>
<dbReference type="Pfam" id="PF00185">
    <property type="entry name" value="OTCace"/>
    <property type="match status" value="1"/>
</dbReference>
<dbReference type="Pfam" id="PF02729">
    <property type="entry name" value="OTCace_N"/>
    <property type="match status" value="1"/>
</dbReference>
<dbReference type="PRINTS" id="PR00100">
    <property type="entry name" value="AOTCASE"/>
</dbReference>
<dbReference type="PRINTS" id="PR00102">
    <property type="entry name" value="OTCASE"/>
</dbReference>
<dbReference type="SUPFAM" id="SSF53671">
    <property type="entry name" value="Aspartate/ornithine carbamoyltransferase"/>
    <property type="match status" value="1"/>
</dbReference>
<dbReference type="PROSITE" id="PS00097">
    <property type="entry name" value="CARBAMOYLTRANSFERASE"/>
    <property type="match status" value="1"/>
</dbReference>
<sequence>MTRHFLRDDDLSPAEQAEVLDLAVQLKRERWSERPLAGPQTVAVIFDKSSTRTRVSFAVGIADLGGVPLVISTANSQLGGKETASDTARVLERQVAAIVWRTYAQSGLEEMAAGTTVPVVNALSDDFHPCQILADLLTIREHRGDLAGQTLVFLGDGASNMAHSYLLGGVTAGMHVRIAAPAGYVPAAVVVADAERIAATTGGSVRILADPVEAVTGADVVITDTWVSMGREEEKAQRLAELGAYQVTTELMAHAVDDAIFLHCLPADREYEVAAEVIDGPQSVVWDEAENRLHAQKALLVWLLRQS</sequence>
<reference key="1">
    <citation type="journal article" date="2008" name="J. Bacteriol.">
        <title>Genome of the actinomycete plant pathogen Clavibacter michiganensis subsp. sepedonicus suggests recent niche adaptation.</title>
        <authorList>
            <person name="Bentley S.D."/>
            <person name="Corton C."/>
            <person name="Brown S.E."/>
            <person name="Barron A."/>
            <person name="Clark L."/>
            <person name="Doggett J."/>
            <person name="Harris B."/>
            <person name="Ormond D."/>
            <person name="Quail M.A."/>
            <person name="May G."/>
            <person name="Francis D."/>
            <person name="Knudson D."/>
            <person name="Parkhill J."/>
            <person name="Ishimaru C.A."/>
        </authorList>
    </citation>
    <scope>NUCLEOTIDE SEQUENCE [LARGE SCALE GENOMIC DNA]</scope>
    <source>
        <strain>ATCC 33113 / DSM 20744 / JCM 9667 / LMG 2889 / ICMP 2535 / C-1</strain>
    </source>
</reference>
<feature type="chain" id="PRO_1000137090" description="Ornithine carbamoyltransferase">
    <location>
        <begin position="1"/>
        <end position="307"/>
    </location>
</feature>
<feature type="binding site" evidence="2">
    <location>
        <begin position="50"/>
        <end position="53"/>
    </location>
    <ligand>
        <name>carbamoyl phosphate</name>
        <dbReference type="ChEBI" id="CHEBI:58228"/>
    </ligand>
</feature>
<feature type="binding site" evidence="2">
    <location>
        <position position="77"/>
    </location>
    <ligand>
        <name>carbamoyl phosphate</name>
        <dbReference type="ChEBI" id="CHEBI:58228"/>
    </ligand>
</feature>
<feature type="binding site" evidence="2">
    <location>
        <position position="101"/>
    </location>
    <ligand>
        <name>carbamoyl phosphate</name>
        <dbReference type="ChEBI" id="CHEBI:58228"/>
    </ligand>
</feature>
<feature type="binding site" evidence="2">
    <location>
        <begin position="128"/>
        <end position="131"/>
    </location>
    <ligand>
        <name>carbamoyl phosphate</name>
        <dbReference type="ChEBI" id="CHEBI:58228"/>
    </ligand>
</feature>
<feature type="binding site" evidence="2">
    <location>
        <position position="160"/>
    </location>
    <ligand>
        <name>L-ornithine</name>
        <dbReference type="ChEBI" id="CHEBI:46911"/>
    </ligand>
</feature>
<feature type="binding site" evidence="2">
    <location>
        <position position="224"/>
    </location>
    <ligand>
        <name>L-ornithine</name>
        <dbReference type="ChEBI" id="CHEBI:46911"/>
    </ligand>
</feature>
<feature type="binding site" evidence="2">
    <location>
        <begin position="228"/>
        <end position="229"/>
    </location>
    <ligand>
        <name>L-ornithine</name>
        <dbReference type="ChEBI" id="CHEBI:46911"/>
    </ligand>
</feature>
<feature type="binding site" evidence="2">
    <location>
        <begin position="264"/>
        <end position="265"/>
    </location>
    <ligand>
        <name>carbamoyl phosphate</name>
        <dbReference type="ChEBI" id="CHEBI:58228"/>
    </ligand>
</feature>
<feature type="binding site" evidence="2">
    <location>
        <position position="292"/>
    </location>
    <ligand>
        <name>carbamoyl phosphate</name>
        <dbReference type="ChEBI" id="CHEBI:58228"/>
    </ligand>
</feature>
<proteinExistence type="inferred from homology"/>
<protein>
    <recommendedName>
        <fullName evidence="2">Ornithine carbamoyltransferase</fullName>
        <shortName evidence="2">OTCase</shortName>
        <ecNumber evidence="2">2.1.3.3</ecNumber>
    </recommendedName>
</protein>
<accession>B0RHD4</accession>
<gene>
    <name evidence="2" type="primary">argF</name>
    <name type="ordered locus">CMS1235</name>
</gene>